<evidence type="ECO:0007829" key="1">
    <source>
        <dbReference type="PDB" id="1M70"/>
    </source>
</evidence>
<organism>
    <name type="scientific">Stutzerimonas stutzeri</name>
    <name type="common">Pseudomonas stutzeri</name>
    <dbReference type="NCBI Taxonomy" id="316"/>
    <lineage>
        <taxon>Bacteria</taxon>
        <taxon>Pseudomonadati</taxon>
        <taxon>Pseudomonadota</taxon>
        <taxon>Gammaproteobacteria</taxon>
        <taxon>Pseudomonadales</taxon>
        <taxon>Pseudomonadaceae</taxon>
        <taxon>Stutzerimonas</taxon>
    </lineage>
</organism>
<gene>
    <name type="primary">cc4</name>
</gene>
<keyword id="KW-0002">3D-structure</keyword>
<keyword id="KW-0249">Electron transport</keyword>
<keyword id="KW-0349">Heme</keyword>
<keyword id="KW-0408">Iron</keyword>
<keyword id="KW-0479">Metal-binding</keyword>
<keyword id="KW-0574">Periplasm</keyword>
<keyword id="KW-0732">Signal</keyword>
<keyword id="KW-0813">Transport</keyword>
<reference key="1">
    <citation type="journal article" date="1994" name="Gene">
        <title>Cloning and characterisation of the gene encoding cytochrome c4 from Pseudomonas stutzeri.</title>
        <authorList>
            <person name="Christensen H.E.M."/>
        </authorList>
    </citation>
    <scope>NUCLEOTIDE SEQUENCE [GENOMIC DNA]</scope>
    <source>
        <strain>ATCC 11607 / DSM 50227 / LMG 1228 / NCIMB 9721 / NCTC 10475 / MD 41.1</strain>
    </source>
</reference>
<reference key="2">
    <citation type="journal article" date="1997" name="Structure">
        <title>Crystal structure of the dihaem cytochrome c4 from Pseudomonas stutzeri determined at 2.2-A resolution.</title>
        <authorList>
            <person name="Kadziola A."/>
            <person name="Larsen S."/>
        </authorList>
    </citation>
    <scope>X-RAY CRYSTALLOGRAPHY (2.2 ANGSTROMS)</scope>
    <source>
        <strain>ATCC 11607 / DSM 50227 / LMG 1228 / NCIMB 9721 / NCTC 10475 / MD 41.1</strain>
    </source>
</reference>
<proteinExistence type="evidence at protein level"/>
<dbReference type="EMBL" id="U05988">
    <property type="protein sequence ID" value="AAA20247.1"/>
    <property type="molecule type" value="Genomic_DNA"/>
</dbReference>
<dbReference type="RefSeq" id="WP_014818660.1">
    <property type="nucleotide sequence ID" value="NZ_PJJZ01000003.1"/>
</dbReference>
<dbReference type="PDB" id="1ETP">
    <property type="method" value="X-ray"/>
    <property type="resolution" value="2.20 A"/>
    <property type="chains" value="A/B=21-210"/>
</dbReference>
<dbReference type="PDB" id="1M6Z">
    <property type="method" value="X-ray"/>
    <property type="resolution" value="1.35 A"/>
    <property type="chains" value="A/B/C/D=21-210"/>
</dbReference>
<dbReference type="PDB" id="1M70">
    <property type="method" value="X-ray"/>
    <property type="resolution" value="1.25 A"/>
    <property type="chains" value="A/B/C/D=21-210"/>
</dbReference>
<dbReference type="PDBsum" id="1ETP"/>
<dbReference type="PDBsum" id="1M6Z"/>
<dbReference type="PDBsum" id="1M70"/>
<dbReference type="SMR" id="Q52369"/>
<dbReference type="DrugBank" id="DB03317">
    <property type="generic name" value="Ferroheme C"/>
</dbReference>
<dbReference type="EvolutionaryTrace" id="Q52369"/>
<dbReference type="GO" id="GO:0042597">
    <property type="term" value="C:periplasmic space"/>
    <property type="evidence" value="ECO:0007669"/>
    <property type="project" value="UniProtKB-SubCell"/>
</dbReference>
<dbReference type="GO" id="GO:0009055">
    <property type="term" value="F:electron transfer activity"/>
    <property type="evidence" value="ECO:0007669"/>
    <property type="project" value="InterPro"/>
</dbReference>
<dbReference type="GO" id="GO:0020037">
    <property type="term" value="F:heme binding"/>
    <property type="evidence" value="ECO:0007669"/>
    <property type="project" value="InterPro"/>
</dbReference>
<dbReference type="GO" id="GO:0005506">
    <property type="term" value="F:iron ion binding"/>
    <property type="evidence" value="ECO:0007669"/>
    <property type="project" value="InterPro"/>
</dbReference>
<dbReference type="FunFam" id="1.10.760.10:FF:000016">
    <property type="entry name" value="Cytochrome c4"/>
    <property type="match status" value="1"/>
</dbReference>
<dbReference type="Gene3D" id="1.10.760.10">
    <property type="entry name" value="Cytochrome c-like domain"/>
    <property type="match status" value="2"/>
</dbReference>
<dbReference type="InterPro" id="IPR009056">
    <property type="entry name" value="Cyt_c-like_dom"/>
</dbReference>
<dbReference type="InterPro" id="IPR036909">
    <property type="entry name" value="Cyt_c-like_dom_sf"/>
</dbReference>
<dbReference type="InterPro" id="IPR024167">
    <property type="entry name" value="Cytochrome_c4-like"/>
</dbReference>
<dbReference type="InterPro" id="IPR050597">
    <property type="entry name" value="Cytochrome_c_Oxidase_Subunit"/>
</dbReference>
<dbReference type="PANTHER" id="PTHR33751">
    <property type="entry name" value="CBB3-TYPE CYTOCHROME C OXIDASE SUBUNIT FIXP"/>
    <property type="match status" value="1"/>
</dbReference>
<dbReference type="PANTHER" id="PTHR33751:SF9">
    <property type="entry name" value="CYTOCHROME C4"/>
    <property type="match status" value="1"/>
</dbReference>
<dbReference type="Pfam" id="PF00034">
    <property type="entry name" value="Cytochrom_C"/>
    <property type="match status" value="2"/>
</dbReference>
<dbReference type="PIRSF" id="PIRSF000005">
    <property type="entry name" value="Cytochrome_c4"/>
    <property type="match status" value="1"/>
</dbReference>
<dbReference type="SUPFAM" id="SSF46626">
    <property type="entry name" value="Cytochrome c"/>
    <property type="match status" value="2"/>
</dbReference>
<dbReference type="PROSITE" id="PS51007">
    <property type="entry name" value="CYTC"/>
    <property type="match status" value="2"/>
</dbReference>
<accession>Q52369</accession>
<name>CYC4_STUST</name>
<feature type="signal peptide">
    <location>
        <begin position="1"/>
        <end position="20"/>
    </location>
</feature>
<feature type="chain" id="PRO_0000006509" description="Cytochrome c4">
    <location>
        <begin position="21"/>
        <end position="210"/>
    </location>
</feature>
<feature type="binding site" description="covalent">
    <location>
        <position position="34"/>
    </location>
    <ligand>
        <name>heme c</name>
        <dbReference type="ChEBI" id="CHEBI:61717"/>
        <label>1</label>
    </ligand>
</feature>
<feature type="binding site" description="covalent">
    <location>
        <position position="37"/>
    </location>
    <ligand>
        <name>heme c</name>
        <dbReference type="ChEBI" id="CHEBI:61717"/>
        <label>1</label>
    </ligand>
</feature>
<feature type="binding site" description="axial binding residue">
    <location>
        <position position="38"/>
    </location>
    <ligand>
        <name>heme c</name>
        <dbReference type="ChEBI" id="CHEBI:61717"/>
        <label>1</label>
    </ligand>
    <ligandPart>
        <name>Fe</name>
        <dbReference type="ChEBI" id="CHEBI:18248"/>
    </ligandPart>
</feature>
<feature type="binding site" description="axial binding residue">
    <location>
        <position position="86"/>
    </location>
    <ligand>
        <name>heme c</name>
        <dbReference type="ChEBI" id="CHEBI:61717"/>
        <label>1</label>
    </ligand>
    <ligandPart>
        <name>Fe</name>
        <dbReference type="ChEBI" id="CHEBI:18248"/>
    </ligandPart>
</feature>
<feature type="binding site" description="covalent">
    <location>
        <position position="139"/>
    </location>
    <ligand>
        <name>heme c</name>
        <dbReference type="ChEBI" id="CHEBI:61717"/>
        <label>2</label>
    </ligand>
</feature>
<feature type="binding site" description="covalent">
    <location>
        <position position="142"/>
    </location>
    <ligand>
        <name>heme c</name>
        <dbReference type="ChEBI" id="CHEBI:61717"/>
        <label>2</label>
    </ligand>
</feature>
<feature type="binding site" description="axial binding residue">
    <location>
        <position position="143"/>
    </location>
    <ligand>
        <name>heme c</name>
        <dbReference type="ChEBI" id="CHEBI:61717"/>
        <label>2</label>
    </ligand>
    <ligandPart>
        <name>Fe</name>
        <dbReference type="ChEBI" id="CHEBI:18248"/>
    </ligandPart>
</feature>
<feature type="binding site" description="axial binding residue">
    <location>
        <position position="187"/>
    </location>
    <ligand>
        <name>heme c</name>
        <dbReference type="ChEBI" id="CHEBI:61717"/>
        <label>2</label>
    </ligand>
    <ligandPart>
        <name>Fe</name>
        <dbReference type="ChEBI" id="CHEBI:18248"/>
    </ligandPart>
</feature>
<feature type="helix" evidence="1">
    <location>
        <begin position="24"/>
        <end position="28"/>
    </location>
</feature>
<feature type="helix" evidence="1">
    <location>
        <begin position="32"/>
        <end position="34"/>
    </location>
</feature>
<feature type="helix" evidence="1">
    <location>
        <begin position="35"/>
        <end position="38"/>
    </location>
</feature>
<feature type="helix" evidence="1">
    <location>
        <begin position="57"/>
        <end position="71"/>
    </location>
</feature>
<feature type="helix" evidence="1">
    <location>
        <begin position="84"/>
        <end position="86"/>
    </location>
</feature>
<feature type="turn" evidence="1">
    <location>
        <begin position="87"/>
        <end position="92"/>
    </location>
</feature>
<feature type="helix" evidence="1">
    <location>
        <begin position="95"/>
        <end position="107"/>
    </location>
</feature>
<feature type="helix" evidence="1">
    <location>
        <begin position="117"/>
        <end position="129"/>
    </location>
</feature>
<feature type="helix" evidence="1">
    <location>
        <begin position="132"/>
        <end position="134"/>
    </location>
</feature>
<feature type="helix" evidence="1">
    <location>
        <begin position="140"/>
        <end position="143"/>
    </location>
</feature>
<feature type="helix" evidence="1">
    <location>
        <begin position="151"/>
        <end position="153"/>
    </location>
</feature>
<feature type="helix" evidence="1">
    <location>
        <begin position="163"/>
        <end position="174"/>
    </location>
</feature>
<feature type="turn" evidence="1">
    <location>
        <begin position="180"/>
        <end position="184"/>
    </location>
</feature>
<feature type="helix" evidence="1">
    <location>
        <begin position="186"/>
        <end position="191"/>
    </location>
</feature>
<feature type="helix" evidence="1">
    <location>
        <begin position="196"/>
        <end position="207"/>
    </location>
</feature>
<protein>
    <recommendedName>
        <fullName>Cytochrome c4</fullName>
    </recommendedName>
</protein>
<comment type="function">
    <text>Diheme, high potential cytochrome c believed to be an intermediate electron donor to terminal oxidation systems.</text>
</comment>
<comment type="subcellular location">
    <subcellularLocation>
        <location>Periplasm</location>
    </subcellularLocation>
</comment>
<comment type="PTM">
    <text>Binds 2 heme c groups covalently per subunit.</text>
</comment>
<sequence>MNKVLVSLLLTLGITGMAHAAGDAEAGQGKVAVCGACHGVDGNSPAPNFPKLAGQGERYLLKQLQDIKAGSTPGAPEGVGRKVLEMTGMLDPLSDQDLEDIAAYFSSQKGSVGYADPALAKQGEKLFRGGKLDQGMPACTGCHAPNGVGNDLAGFPKLGGQHAAYTAKQLTDFREGNRTNDGDTMIMRGVAAKLSNKDIEALSSYIQGLH</sequence>